<gene>
    <name type="primary">GFAP</name>
</gene>
<accession>Q28115</accession>
<accession>Q0P5L4</accession>
<accession>Q866S9</accession>
<protein>
    <recommendedName>
        <fullName>Glial fibrillary acidic protein</fullName>
        <shortName>GFAP</shortName>
    </recommendedName>
</protein>
<comment type="function">
    <text>GFAP, a class-III intermediate filament, is a cell-specific marker that, during the development of the central nervous system, distinguishes astrocytes from other glial cells.</text>
</comment>
<comment type="subunit">
    <text evidence="2">Interacts with SYNM.</text>
</comment>
<comment type="interaction">
    <interactant intactId="EBI-907866">
        <id>Q28115</id>
    </interactant>
    <interactant intactId="EBI-1042651">
        <id>Q96RG2</id>
        <label>PASK</label>
    </interactant>
    <organismsDiffer>true</organismsDiffer>
    <experiments>2</experiments>
</comment>
<comment type="subcellular location">
    <subcellularLocation>
        <location evidence="3">Cytoplasm</location>
    </subcellularLocation>
    <text evidence="3">Associated with intermediate filaments.</text>
</comment>
<comment type="PTM">
    <text evidence="3">Phosphorylated by PKN1.</text>
</comment>
<comment type="similarity">
    <text evidence="5">Belongs to the intermediate filament family.</text>
</comment>
<proteinExistence type="evidence at protein level"/>
<feature type="chain" id="PRO_0000063804" description="Glial fibrillary acidic protein">
    <location>
        <begin position="1"/>
        <end position="428"/>
    </location>
</feature>
<feature type="domain" description="IF rod" evidence="5">
    <location>
        <begin position="65"/>
        <end position="373"/>
    </location>
</feature>
<feature type="region of interest" description="Head">
    <location>
        <begin position="1"/>
        <end position="68"/>
    </location>
</feature>
<feature type="region of interest" description="Coil 1A">
    <location>
        <begin position="69"/>
        <end position="100"/>
    </location>
</feature>
<feature type="region of interest" description="Linker 1">
    <location>
        <begin position="101"/>
        <end position="111"/>
    </location>
</feature>
<feature type="region of interest" description="Coil 1B">
    <location>
        <begin position="112"/>
        <end position="210"/>
    </location>
</feature>
<feature type="region of interest" description="Linker 12">
    <location>
        <begin position="211"/>
        <end position="226"/>
    </location>
</feature>
<feature type="region of interest" description="Coil 2A">
    <location>
        <begin position="227"/>
        <end position="248"/>
    </location>
</feature>
<feature type="region of interest" description="Linker 2">
    <location>
        <begin position="249"/>
        <end position="252"/>
    </location>
</feature>
<feature type="region of interest" description="Coil 2B">
    <location>
        <begin position="253"/>
        <end position="373"/>
    </location>
</feature>
<feature type="region of interest" description="Tail">
    <location>
        <begin position="374"/>
        <end position="428"/>
    </location>
</feature>
<feature type="modified residue" description="Phosphothreonine; by AURKB and ROCK1" evidence="3">
    <location>
        <position position="7"/>
    </location>
</feature>
<feature type="modified residue" description="Omega-N-methylarginine" evidence="2">
    <location>
        <position position="12"/>
    </location>
</feature>
<feature type="modified residue" description="Phosphoserine; by AURKB and ROCK1" evidence="3">
    <location>
        <position position="13"/>
    </location>
</feature>
<feature type="modified residue" description="Citrulline" evidence="1">
    <location>
        <position position="26"/>
    </location>
</feature>
<feature type="modified residue" description="Citrulline" evidence="1">
    <location>
        <position position="32"/>
    </location>
</feature>
<feature type="modified residue" description="Phosphoserine; by AURKB and ROCK1" evidence="3">
    <location>
        <position position="34"/>
    </location>
</feature>
<feature type="modified residue" description="Phosphoserine" evidence="4">
    <location>
        <position position="78"/>
    </location>
</feature>
<feature type="modified residue" description="Phosphothreonine" evidence="4">
    <location>
        <position position="106"/>
    </location>
</feature>
<feature type="modified residue" description="Phosphothreonine" evidence="4">
    <location>
        <position position="146"/>
    </location>
</feature>
<feature type="modified residue" description="Citrulline" evidence="1">
    <location>
        <position position="266"/>
    </location>
</feature>
<feature type="modified residue" description="Phosphoserine" evidence="4">
    <location>
        <position position="319"/>
    </location>
</feature>
<feature type="modified residue" description="Phosphothreonine" evidence="4">
    <location>
        <position position="379"/>
    </location>
</feature>
<feature type="modified residue" description="Phosphoserine" evidence="4">
    <location>
        <position position="381"/>
    </location>
</feature>
<feature type="modified residue" description="Citrulline" evidence="1">
    <location>
        <position position="402"/>
    </location>
</feature>
<feature type="modified residue" description="Citrulline" evidence="1">
    <location>
        <position position="412"/>
    </location>
</feature>
<feature type="sequence conflict" description="In Ref. 1; CAA69422 and 3; AAO18221." evidence="6" ref="1 3">
    <original>A</original>
    <variation>R</variation>
    <location>
        <position position="265"/>
    </location>
</feature>
<feature type="sequence conflict" description="In Ref. 1; CAA69422 and 3; AAO18221." evidence="6" ref="1 3">
    <original>L</original>
    <variation>V</variation>
    <location>
        <position position="271"/>
    </location>
</feature>
<feature type="sequence conflict" description="In Ref. 1; CAA69422 and 3; AAO18221." evidence="6" ref="1 3">
    <original>ER</original>
    <variation>DA</variation>
    <location>
        <begin position="311"/>
        <end position="312"/>
    </location>
</feature>
<feature type="sequence conflict" description="In Ref. 3; AAO18221." evidence="6" ref="3">
    <original>R</original>
    <variation>Q</variation>
    <location>
        <position position="372"/>
    </location>
</feature>
<feature type="sequence conflict" description="In Ref. 1; CAA69422." evidence="6" ref="1">
    <original>K</original>
    <variation>P</variation>
    <location>
        <position position="421"/>
    </location>
</feature>
<keyword id="KW-0164">Citrullination</keyword>
<keyword id="KW-0175">Coiled coil</keyword>
<keyword id="KW-0963">Cytoplasm</keyword>
<keyword id="KW-0403">Intermediate filament</keyword>
<keyword id="KW-0488">Methylation</keyword>
<keyword id="KW-0597">Phosphoprotein</keyword>
<keyword id="KW-1185">Reference proteome</keyword>
<organism>
    <name type="scientific">Bos taurus</name>
    <name type="common">Bovine</name>
    <dbReference type="NCBI Taxonomy" id="9913"/>
    <lineage>
        <taxon>Eukaryota</taxon>
        <taxon>Metazoa</taxon>
        <taxon>Chordata</taxon>
        <taxon>Craniata</taxon>
        <taxon>Vertebrata</taxon>
        <taxon>Euteleostomi</taxon>
        <taxon>Mammalia</taxon>
        <taxon>Eutheria</taxon>
        <taxon>Laurasiatheria</taxon>
        <taxon>Artiodactyla</taxon>
        <taxon>Ruminantia</taxon>
        <taxon>Pecora</taxon>
        <taxon>Bovidae</taxon>
        <taxon>Bovinae</taxon>
        <taxon>Bos</taxon>
    </lineage>
</organism>
<reference key="1">
    <citation type="journal article" date="1999" name="Cell Tissue Res.">
        <title>Use of a heterologous monoclonal antibody for cloning and detection of glial fibrillary acidic protein in the bovine ventricular ependyma.</title>
        <authorList>
            <person name="Bouchard P."/>
            <person name="Ravet V."/>
            <person name="Meiniel R."/>
            <person name="Creveaux I."/>
            <person name="Meiniel A."/>
            <person name="Vellet A."/>
            <person name="Vigues B."/>
        </authorList>
    </citation>
    <scope>NUCLEOTIDE SEQUENCE [MRNA]</scope>
    <source>
        <tissue>Subcommissural organ</tissue>
    </source>
</reference>
<reference key="2">
    <citation type="submission" date="2006-08" db="EMBL/GenBank/DDBJ databases">
        <authorList>
            <consortium name="NIH - Mammalian Gene Collection (MGC) project"/>
        </authorList>
    </citation>
    <scope>NUCLEOTIDE SEQUENCE [LARGE SCALE MRNA]</scope>
    <source>
        <strain>Hereford</strain>
        <tissue>Thalamus</tissue>
    </source>
</reference>
<reference key="3">
    <citation type="submission" date="2002-11" db="EMBL/GenBank/DDBJ databases">
        <title>Nucleotide sequence of the bovine glial fibrillary acidic protein (GFAP) gene.</title>
        <authorList>
            <person name="Guertler M."/>
            <person name="Alter T."/>
            <person name="Froeb A."/>
            <person name="Lange B."/>
            <person name="Johne R."/>
            <person name="Luecker E."/>
            <person name="Fehlhaber K."/>
        </authorList>
    </citation>
    <scope>NUCLEOTIDE SEQUENCE [GENOMIC DNA] OF 1-416</scope>
</reference>
<reference key="4">
    <citation type="journal article" date="1994" name="Anim. Genet.">
        <title>Conformation polymorphisms and targeted marker development.</title>
        <authorList>
            <person name="Kirkpatrick B.W."/>
            <person name="Hart G.L."/>
        </authorList>
    </citation>
    <scope>NUCLEOTIDE SEQUENCE [GENOMIC DNA] OF 197-227</scope>
</reference>
<dbReference type="EMBL" id="Y08255">
    <property type="protein sequence ID" value="CAA69422.1"/>
    <property type="molecule type" value="mRNA"/>
</dbReference>
<dbReference type="EMBL" id="BC119892">
    <property type="protein sequence ID" value="AAI19893.1"/>
    <property type="molecule type" value="mRNA"/>
</dbReference>
<dbReference type="EMBL" id="AY174179">
    <property type="protein sequence ID" value="AAO18221.1"/>
    <property type="status" value="ALT_TERM"/>
    <property type="molecule type" value="Genomic_DNA"/>
</dbReference>
<dbReference type="EMBL" id="L19867">
    <property type="protein sequence ID" value="AAA51413.1"/>
    <property type="molecule type" value="Genomic_DNA"/>
</dbReference>
<dbReference type="PIR" id="PC2280">
    <property type="entry name" value="PC2280"/>
</dbReference>
<dbReference type="RefSeq" id="NP_776490.2">
    <property type="nucleotide sequence ID" value="NM_174065.2"/>
</dbReference>
<dbReference type="SMR" id="Q28115"/>
<dbReference type="FunCoup" id="Q28115">
    <property type="interactions" value="204"/>
</dbReference>
<dbReference type="IntAct" id="Q28115">
    <property type="interactions" value="2"/>
</dbReference>
<dbReference type="MINT" id="Q28115"/>
<dbReference type="STRING" id="9913.ENSBTAP00000073843"/>
<dbReference type="iPTMnet" id="Q28115"/>
<dbReference type="PaxDb" id="9913-ENSBTAP00000017997"/>
<dbReference type="PeptideAtlas" id="Q28115"/>
<dbReference type="Ensembl" id="ENSBTAT00000017997.5">
    <property type="protein sequence ID" value="ENSBTAP00000017997.4"/>
    <property type="gene ID" value="ENSBTAG00000013534.6"/>
</dbReference>
<dbReference type="GeneID" id="281189"/>
<dbReference type="KEGG" id="bta:281189"/>
<dbReference type="CTD" id="2670"/>
<dbReference type="VEuPathDB" id="HostDB:ENSBTAG00000013534"/>
<dbReference type="VGNC" id="VGNC:29323">
    <property type="gene designation" value="GFAP"/>
</dbReference>
<dbReference type="eggNOG" id="ENOG502RKU6">
    <property type="taxonomic scope" value="Eukaryota"/>
</dbReference>
<dbReference type="GeneTree" id="ENSGT00940000159539"/>
<dbReference type="HOGENOM" id="CLU_012560_7_4_1"/>
<dbReference type="InParanoid" id="Q28115"/>
<dbReference type="OMA" id="QYETMAT"/>
<dbReference type="OrthoDB" id="2441647at2759"/>
<dbReference type="TreeFam" id="TF330122"/>
<dbReference type="Proteomes" id="UP000009136">
    <property type="component" value="Chromosome 19"/>
</dbReference>
<dbReference type="Bgee" id="ENSBTAG00000013534">
    <property type="expression patterns" value="Expressed in midbrain and 81 other cell types or tissues"/>
</dbReference>
<dbReference type="GO" id="GO:0042995">
    <property type="term" value="C:cell projection"/>
    <property type="evidence" value="ECO:0000318"/>
    <property type="project" value="GO_Central"/>
</dbReference>
<dbReference type="GO" id="GO:0005737">
    <property type="term" value="C:cytoplasm"/>
    <property type="evidence" value="ECO:0007669"/>
    <property type="project" value="UniProtKB-SubCell"/>
</dbReference>
<dbReference type="GO" id="GO:0005882">
    <property type="term" value="C:intermediate filament"/>
    <property type="evidence" value="ECO:0000318"/>
    <property type="project" value="GO_Central"/>
</dbReference>
<dbReference type="GO" id="GO:0005200">
    <property type="term" value="F:structural constituent of cytoskeleton"/>
    <property type="evidence" value="ECO:0000318"/>
    <property type="project" value="GO_Central"/>
</dbReference>
<dbReference type="GO" id="GO:0045109">
    <property type="term" value="P:intermediate filament organization"/>
    <property type="evidence" value="ECO:0000250"/>
    <property type="project" value="UniProtKB"/>
</dbReference>
<dbReference type="GO" id="GO:1904714">
    <property type="term" value="P:regulation of chaperone-mediated autophagy"/>
    <property type="evidence" value="ECO:0000318"/>
    <property type="project" value="GO_Central"/>
</dbReference>
<dbReference type="FunFam" id="1.20.5.1160:FF:000001">
    <property type="entry name" value="Keratin type II"/>
    <property type="match status" value="1"/>
</dbReference>
<dbReference type="FunFam" id="1.20.5.170:FF:000002">
    <property type="entry name" value="Type I keratin KA11"/>
    <property type="match status" value="1"/>
</dbReference>
<dbReference type="FunFam" id="1.20.5.500:FF:000001">
    <property type="entry name" value="Type II keratin 23"/>
    <property type="match status" value="1"/>
</dbReference>
<dbReference type="Gene3D" id="1.20.5.170">
    <property type="match status" value="1"/>
</dbReference>
<dbReference type="Gene3D" id="1.20.5.500">
    <property type="entry name" value="Single helix bin"/>
    <property type="match status" value="1"/>
</dbReference>
<dbReference type="Gene3D" id="1.20.5.1160">
    <property type="entry name" value="Vasodilator-stimulated phosphoprotein"/>
    <property type="match status" value="1"/>
</dbReference>
<dbReference type="InterPro" id="IPR018039">
    <property type="entry name" value="IF_conserved"/>
</dbReference>
<dbReference type="InterPro" id="IPR039008">
    <property type="entry name" value="IF_rod_dom"/>
</dbReference>
<dbReference type="InterPro" id="IPR006821">
    <property type="entry name" value="Intermed_filament_DNA-bd"/>
</dbReference>
<dbReference type="InterPro" id="IPR050405">
    <property type="entry name" value="Intermediate_filament"/>
</dbReference>
<dbReference type="PANTHER" id="PTHR45652">
    <property type="entry name" value="GLIAL FIBRILLARY ACIDIC PROTEIN"/>
    <property type="match status" value="1"/>
</dbReference>
<dbReference type="PANTHER" id="PTHR45652:SF9">
    <property type="entry name" value="GLIAL FIBRILLARY ACIDIC PROTEIN"/>
    <property type="match status" value="1"/>
</dbReference>
<dbReference type="Pfam" id="PF00038">
    <property type="entry name" value="Filament"/>
    <property type="match status" value="1"/>
</dbReference>
<dbReference type="Pfam" id="PF04732">
    <property type="entry name" value="Filament_head"/>
    <property type="match status" value="1"/>
</dbReference>
<dbReference type="SMART" id="SM01391">
    <property type="entry name" value="Filament"/>
    <property type="match status" value="1"/>
</dbReference>
<dbReference type="SUPFAM" id="SSF64593">
    <property type="entry name" value="Intermediate filament protein, coiled coil region"/>
    <property type="match status" value="2"/>
</dbReference>
<dbReference type="PROSITE" id="PS00226">
    <property type="entry name" value="IF_ROD_1"/>
    <property type="match status" value="1"/>
</dbReference>
<dbReference type="PROSITE" id="PS51842">
    <property type="entry name" value="IF_ROD_2"/>
    <property type="match status" value="1"/>
</dbReference>
<sequence>MERRRVTSATRRSYVSSSEMVVGGRRLGPGTRLSLARMPPPLPARVDFSLAGALNSGFKETRASERAEMMELNDRFASYIEKVRFLEQQNKALAAELNQLRAKEPTKLADVYQAELRELRLRLDQLTANSARLEVERDNLAQDLGTLRQKLQDETNQRLEAENNLAAYRQEADEATLARLDLERKIESLEEEIRFLRKIHEEEVRELQEQLAQQQVHVEMDVAKPDLTAALREIRTQYEAVASSNMHEAEEWYRSKFADLNDAAARNAELLRQAKHEANDYRRQLQALTCDLESLRGTNESLERQMREQEERHAREAASYQEALARLEEEGQSLKDEMARHLQEYQDLLNVKLALDIEIATYRKLLEGEENRITIPVQTFSNLQIRETSLDTKSVSEGHLKRNIVVKTVEMRDGEVIKESKQEHKDVM</sequence>
<name>GFAP_BOVIN</name>
<evidence type="ECO:0000250" key="1"/>
<evidence type="ECO:0000250" key="2">
    <source>
        <dbReference type="UniProtKB" id="P03995"/>
    </source>
</evidence>
<evidence type="ECO:0000250" key="3">
    <source>
        <dbReference type="UniProtKB" id="P14136"/>
    </source>
</evidence>
<evidence type="ECO:0000250" key="4">
    <source>
        <dbReference type="UniProtKB" id="P47819"/>
    </source>
</evidence>
<evidence type="ECO:0000255" key="5">
    <source>
        <dbReference type="PROSITE-ProRule" id="PRU01188"/>
    </source>
</evidence>
<evidence type="ECO:0000305" key="6"/>